<keyword id="KW-0963">Cytoplasm</keyword>
<keyword id="KW-0396">Initiation factor</keyword>
<keyword id="KW-0648">Protein biosynthesis</keyword>
<keyword id="KW-1185">Reference proteome</keyword>
<name>IF3_LACPL</name>
<feature type="chain" id="PRO_0000177531" description="Translation initiation factor IF-3">
    <location>
        <begin position="1"/>
        <end position="173"/>
    </location>
</feature>
<protein>
    <recommendedName>
        <fullName evidence="1">Translation initiation factor IF-3</fullName>
    </recommendedName>
</protein>
<accession>Q88WU8</accession>
<accession>F9UNQ2</accession>
<reference key="1">
    <citation type="journal article" date="2003" name="Proc. Natl. Acad. Sci. U.S.A.">
        <title>Complete genome sequence of Lactobacillus plantarum WCFS1.</title>
        <authorList>
            <person name="Kleerebezem M."/>
            <person name="Boekhorst J."/>
            <person name="van Kranenburg R."/>
            <person name="Molenaar D."/>
            <person name="Kuipers O.P."/>
            <person name="Leer R."/>
            <person name="Tarchini R."/>
            <person name="Peters S.A."/>
            <person name="Sandbrink H.M."/>
            <person name="Fiers M.W.E.J."/>
            <person name="Stiekema W."/>
            <person name="Klein Lankhorst R.M."/>
            <person name="Bron P.A."/>
            <person name="Hoffer S.M."/>
            <person name="Nierop Groot M.N."/>
            <person name="Kerkhoven R."/>
            <person name="De Vries M."/>
            <person name="Ursing B."/>
            <person name="De Vos W.M."/>
            <person name="Siezen R.J."/>
        </authorList>
    </citation>
    <scope>NUCLEOTIDE SEQUENCE [LARGE SCALE GENOMIC DNA]</scope>
    <source>
        <strain>ATCC BAA-793 / NCIMB 8826 / WCFS1</strain>
    </source>
</reference>
<reference key="2">
    <citation type="journal article" date="2012" name="J. Bacteriol.">
        <title>Complete resequencing and reannotation of the Lactobacillus plantarum WCFS1 genome.</title>
        <authorList>
            <person name="Siezen R.J."/>
            <person name="Francke C."/>
            <person name="Renckens B."/>
            <person name="Boekhorst J."/>
            <person name="Wels M."/>
            <person name="Kleerebezem M."/>
            <person name="van Hijum S.A."/>
        </authorList>
    </citation>
    <scope>NUCLEOTIDE SEQUENCE [LARGE SCALE GENOMIC DNA]</scope>
    <scope>GENOME REANNOTATION</scope>
    <source>
        <strain>ATCC BAA-793 / NCIMB 8826 / WCFS1</strain>
    </source>
</reference>
<comment type="function">
    <text evidence="1">IF-3 binds to the 30S ribosomal subunit and shifts the equilibrium between 70S ribosomes and their 50S and 30S subunits in favor of the free subunits, thus enhancing the availability of 30S subunits on which protein synthesis initiation begins.</text>
</comment>
<comment type="subunit">
    <text evidence="1">Monomer.</text>
</comment>
<comment type="subcellular location">
    <subcellularLocation>
        <location evidence="1">Cytoplasm</location>
    </subcellularLocation>
</comment>
<comment type="similarity">
    <text evidence="1">Belongs to the IF-3 family.</text>
</comment>
<gene>
    <name evidence="1" type="primary">infC</name>
    <name type="ordered locus">lp_1515</name>
</gene>
<sequence>MTIAKDSMVNDGIRAREVRLIASDGEQLGVKSRQEAMQIAEDASLDLVLVAPKAKPPVARIMDYGKYRFEQQKKDREARKKQKVVSIKEVRLSPAIDTNDFNTKLKHAEKFLSKGDKVRVSIRFKGRAITHKDIGRQVLNRMIEATKEFSTVEAYPKMDGRSMFLVLAPKTDK</sequence>
<evidence type="ECO:0000255" key="1">
    <source>
        <dbReference type="HAMAP-Rule" id="MF_00080"/>
    </source>
</evidence>
<organism>
    <name type="scientific">Lactiplantibacillus plantarum (strain ATCC BAA-793 / NCIMB 8826 / WCFS1)</name>
    <name type="common">Lactobacillus plantarum</name>
    <dbReference type="NCBI Taxonomy" id="220668"/>
    <lineage>
        <taxon>Bacteria</taxon>
        <taxon>Bacillati</taxon>
        <taxon>Bacillota</taxon>
        <taxon>Bacilli</taxon>
        <taxon>Lactobacillales</taxon>
        <taxon>Lactobacillaceae</taxon>
        <taxon>Lactiplantibacillus</taxon>
    </lineage>
</organism>
<dbReference type="EMBL" id="AL935263">
    <property type="protein sequence ID" value="CCC78841.1"/>
    <property type="molecule type" value="Genomic_DNA"/>
</dbReference>
<dbReference type="RefSeq" id="YP_004889355.1">
    <property type="nucleotide sequence ID" value="NC_004567.2"/>
</dbReference>
<dbReference type="SMR" id="Q88WU8"/>
<dbReference type="STRING" id="220668.lp_1515"/>
<dbReference type="EnsemblBacteria" id="CCC78841">
    <property type="protein sequence ID" value="CCC78841"/>
    <property type="gene ID" value="lp_1515"/>
</dbReference>
<dbReference type="KEGG" id="lpl:lp_1515"/>
<dbReference type="PATRIC" id="fig|220668.9.peg.1275"/>
<dbReference type="eggNOG" id="COG0290">
    <property type="taxonomic scope" value="Bacteria"/>
</dbReference>
<dbReference type="HOGENOM" id="CLU_054919_3_2_9"/>
<dbReference type="OrthoDB" id="9806014at2"/>
<dbReference type="PhylomeDB" id="Q88WU8"/>
<dbReference type="Proteomes" id="UP000000432">
    <property type="component" value="Chromosome"/>
</dbReference>
<dbReference type="GO" id="GO:0005829">
    <property type="term" value="C:cytosol"/>
    <property type="evidence" value="ECO:0007669"/>
    <property type="project" value="TreeGrafter"/>
</dbReference>
<dbReference type="GO" id="GO:0016020">
    <property type="term" value="C:membrane"/>
    <property type="evidence" value="ECO:0007669"/>
    <property type="project" value="TreeGrafter"/>
</dbReference>
<dbReference type="GO" id="GO:0043022">
    <property type="term" value="F:ribosome binding"/>
    <property type="evidence" value="ECO:0007669"/>
    <property type="project" value="TreeGrafter"/>
</dbReference>
<dbReference type="GO" id="GO:0003743">
    <property type="term" value="F:translation initiation factor activity"/>
    <property type="evidence" value="ECO:0007669"/>
    <property type="project" value="UniProtKB-UniRule"/>
</dbReference>
<dbReference type="GO" id="GO:0032790">
    <property type="term" value="P:ribosome disassembly"/>
    <property type="evidence" value="ECO:0007669"/>
    <property type="project" value="TreeGrafter"/>
</dbReference>
<dbReference type="FunFam" id="3.10.20.80:FF:000001">
    <property type="entry name" value="Translation initiation factor IF-3"/>
    <property type="match status" value="1"/>
</dbReference>
<dbReference type="FunFam" id="3.30.110.10:FF:000001">
    <property type="entry name" value="Translation initiation factor IF-3"/>
    <property type="match status" value="1"/>
</dbReference>
<dbReference type="Gene3D" id="3.30.110.10">
    <property type="entry name" value="Translation initiation factor 3 (IF-3), C-terminal domain"/>
    <property type="match status" value="1"/>
</dbReference>
<dbReference type="Gene3D" id="3.10.20.80">
    <property type="entry name" value="Translation initiation factor 3 (IF-3), N-terminal domain"/>
    <property type="match status" value="1"/>
</dbReference>
<dbReference type="HAMAP" id="MF_00080">
    <property type="entry name" value="IF_3"/>
    <property type="match status" value="1"/>
</dbReference>
<dbReference type="InterPro" id="IPR036788">
    <property type="entry name" value="T_IF-3_C_sf"/>
</dbReference>
<dbReference type="InterPro" id="IPR036787">
    <property type="entry name" value="T_IF-3_N_sf"/>
</dbReference>
<dbReference type="InterPro" id="IPR019813">
    <property type="entry name" value="Translation_initiation_fac3_CS"/>
</dbReference>
<dbReference type="InterPro" id="IPR001288">
    <property type="entry name" value="Translation_initiation_fac_3"/>
</dbReference>
<dbReference type="InterPro" id="IPR019815">
    <property type="entry name" value="Translation_initiation_fac_3_C"/>
</dbReference>
<dbReference type="InterPro" id="IPR019814">
    <property type="entry name" value="Translation_initiation_fac_3_N"/>
</dbReference>
<dbReference type="NCBIfam" id="TIGR00168">
    <property type="entry name" value="infC"/>
    <property type="match status" value="1"/>
</dbReference>
<dbReference type="PANTHER" id="PTHR10938">
    <property type="entry name" value="TRANSLATION INITIATION FACTOR IF-3"/>
    <property type="match status" value="1"/>
</dbReference>
<dbReference type="PANTHER" id="PTHR10938:SF0">
    <property type="entry name" value="TRANSLATION INITIATION FACTOR IF-3, MITOCHONDRIAL"/>
    <property type="match status" value="1"/>
</dbReference>
<dbReference type="Pfam" id="PF00707">
    <property type="entry name" value="IF3_C"/>
    <property type="match status" value="1"/>
</dbReference>
<dbReference type="Pfam" id="PF05198">
    <property type="entry name" value="IF3_N"/>
    <property type="match status" value="1"/>
</dbReference>
<dbReference type="SUPFAM" id="SSF55200">
    <property type="entry name" value="Translation initiation factor IF3, C-terminal domain"/>
    <property type="match status" value="1"/>
</dbReference>
<dbReference type="SUPFAM" id="SSF54364">
    <property type="entry name" value="Translation initiation factor IF3, N-terminal domain"/>
    <property type="match status" value="1"/>
</dbReference>
<dbReference type="PROSITE" id="PS00938">
    <property type="entry name" value="IF3"/>
    <property type="match status" value="1"/>
</dbReference>
<proteinExistence type="inferred from homology"/>